<keyword id="KW-0064">Aspartyl protease</keyword>
<keyword id="KW-0997">Cell inner membrane</keyword>
<keyword id="KW-1003">Cell membrane</keyword>
<keyword id="KW-0378">Hydrolase</keyword>
<keyword id="KW-0472">Membrane</keyword>
<keyword id="KW-0645">Protease</keyword>
<keyword id="KW-0812">Transmembrane</keyword>
<keyword id="KW-1133">Transmembrane helix</keyword>
<sequence>MSEKALTLKQSGVRWLWLAILVFIADIGIKLVVMDNMGYGWANRIEVLPFFNLLYVHNYGAAFSFLSDQAGWQRWLFTGIAFVVTGLLTYWMSKLPAKEKWNNIAYALIIGGAVGNVFDRVVHGFVVDYLDFFWGSYHWPAFNLADTTICIGAAMIILDGFRKKDANK</sequence>
<comment type="function">
    <text evidence="1">This protein specifically catalyzes the removal of signal peptides from prolipoproteins.</text>
</comment>
<comment type="catalytic activity">
    <reaction evidence="1">
        <text>Release of signal peptides from bacterial membrane prolipoproteins. Hydrolyzes -Xaa-Yaa-Zaa-|-(S,diacylglyceryl)Cys-, in which Xaa is hydrophobic (preferably Leu), and Yaa (Ala or Ser) and Zaa (Gly or Ala) have small, neutral side chains.</text>
        <dbReference type="EC" id="3.4.23.36"/>
    </reaction>
</comment>
<comment type="pathway">
    <text evidence="1">Protein modification; lipoprotein biosynthesis (signal peptide cleavage).</text>
</comment>
<comment type="subcellular location">
    <subcellularLocation>
        <location evidence="1">Cell inner membrane</location>
        <topology evidence="1">Multi-pass membrane protein</topology>
    </subcellularLocation>
</comment>
<comment type="similarity">
    <text evidence="1">Belongs to the peptidase A8 family.</text>
</comment>
<name>LSPA_VIBC1</name>
<gene>
    <name evidence="1" type="primary">lspA</name>
    <name type="ordered locus">VIBHAR_00981</name>
</gene>
<feature type="chain" id="PRO_1000038827" description="Lipoprotein signal peptidase">
    <location>
        <begin position="1"/>
        <end position="168"/>
    </location>
</feature>
<feature type="transmembrane region" description="Helical" evidence="1">
    <location>
        <begin position="15"/>
        <end position="35"/>
    </location>
</feature>
<feature type="transmembrane region" description="Helical" evidence="1">
    <location>
        <begin position="47"/>
        <end position="67"/>
    </location>
</feature>
<feature type="transmembrane region" description="Helical" evidence="1">
    <location>
        <begin position="75"/>
        <end position="95"/>
    </location>
</feature>
<feature type="transmembrane region" description="Helical" evidence="1">
    <location>
        <begin position="107"/>
        <end position="127"/>
    </location>
</feature>
<feature type="transmembrane region" description="Helical" evidence="1">
    <location>
        <begin position="141"/>
        <end position="161"/>
    </location>
</feature>
<feature type="active site" evidence="1">
    <location>
        <position position="128"/>
    </location>
</feature>
<feature type="active site" evidence="1">
    <location>
        <position position="146"/>
    </location>
</feature>
<reference key="1">
    <citation type="submission" date="2007-08" db="EMBL/GenBank/DDBJ databases">
        <authorList>
            <consortium name="The Vibrio harveyi Genome Sequencing Project"/>
            <person name="Bassler B."/>
            <person name="Clifton S.W."/>
            <person name="Fulton L."/>
            <person name="Delehaunty K."/>
            <person name="Fronick C."/>
            <person name="Harrison M."/>
            <person name="Markivic C."/>
            <person name="Fulton R."/>
            <person name="Tin-Wollam A.-M."/>
            <person name="Shah N."/>
            <person name="Pepin K."/>
            <person name="Nash W."/>
            <person name="Thiruvilangam P."/>
            <person name="Bhonagiri V."/>
            <person name="Waters C."/>
            <person name="Tu K.C."/>
            <person name="Irgon J."/>
            <person name="Wilson R.K."/>
        </authorList>
    </citation>
    <scope>NUCLEOTIDE SEQUENCE [LARGE SCALE GENOMIC DNA]</scope>
    <source>
        <strain>ATCC BAA-1116 / BB120</strain>
    </source>
</reference>
<dbReference type="EC" id="3.4.23.36" evidence="1"/>
<dbReference type="EMBL" id="CP000789">
    <property type="protein sequence ID" value="ABU69980.1"/>
    <property type="molecule type" value="Genomic_DNA"/>
</dbReference>
<dbReference type="RefSeq" id="WP_005533266.1">
    <property type="nucleotide sequence ID" value="NC_009783.1"/>
</dbReference>
<dbReference type="SMR" id="A7MTD7"/>
<dbReference type="MEROPS" id="A08.001"/>
<dbReference type="KEGG" id="vha:VIBHAR_00981"/>
<dbReference type="PATRIC" id="fig|338187.25.peg.1640"/>
<dbReference type="UniPathway" id="UPA00665"/>
<dbReference type="Proteomes" id="UP000008152">
    <property type="component" value="Chromosome I"/>
</dbReference>
<dbReference type="GO" id="GO:0005886">
    <property type="term" value="C:plasma membrane"/>
    <property type="evidence" value="ECO:0007669"/>
    <property type="project" value="UniProtKB-SubCell"/>
</dbReference>
<dbReference type="GO" id="GO:0004190">
    <property type="term" value="F:aspartic-type endopeptidase activity"/>
    <property type="evidence" value="ECO:0007669"/>
    <property type="project" value="UniProtKB-UniRule"/>
</dbReference>
<dbReference type="GO" id="GO:0006508">
    <property type="term" value="P:proteolysis"/>
    <property type="evidence" value="ECO:0007669"/>
    <property type="project" value="UniProtKB-KW"/>
</dbReference>
<dbReference type="HAMAP" id="MF_00161">
    <property type="entry name" value="LspA"/>
    <property type="match status" value="1"/>
</dbReference>
<dbReference type="InterPro" id="IPR001872">
    <property type="entry name" value="Peptidase_A8"/>
</dbReference>
<dbReference type="NCBIfam" id="TIGR00077">
    <property type="entry name" value="lspA"/>
    <property type="match status" value="1"/>
</dbReference>
<dbReference type="PANTHER" id="PTHR33695">
    <property type="entry name" value="LIPOPROTEIN SIGNAL PEPTIDASE"/>
    <property type="match status" value="1"/>
</dbReference>
<dbReference type="PANTHER" id="PTHR33695:SF1">
    <property type="entry name" value="LIPOPROTEIN SIGNAL PEPTIDASE"/>
    <property type="match status" value="1"/>
</dbReference>
<dbReference type="Pfam" id="PF01252">
    <property type="entry name" value="Peptidase_A8"/>
    <property type="match status" value="1"/>
</dbReference>
<dbReference type="PRINTS" id="PR00781">
    <property type="entry name" value="LIPOSIGPTASE"/>
</dbReference>
<dbReference type="PROSITE" id="PS00855">
    <property type="entry name" value="SPASE_II"/>
    <property type="match status" value="1"/>
</dbReference>
<proteinExistence type="inferred from homology"/>
<protein>
    <recommendedName>
        <fullName evidence="1">Lipoprotein signal peptidase</fullName>
        <ecNumber evidence="1">3.4.23.36</ecNumber>
    </recommendedName>
    <alternativeName>
        <fullName evidence="1">Prolipoprotein signal peptidase</fullName>
    </alternativeName>
    <alternativeName>
        <fullName evidence="1">Signal peptidase II</fullName>
        <shortName evidence="1">SPase II</shortName>
    </alternativeName>
</protein>
<organism>
    <name type="scientific">Vibrio campbellii (strain ATCC BAA-1116)</name>
    <dbReference type="NCBI Taxonomy" id="2902295"/>
    <lineage>
        <taxon>Bacteria</taxon>
        <taxon>Pseudomonadati</taxon>
        <taxon>Pseudomonadota</taxon>
        <taxon>Gammaproteobacteria</taxon>
        <taxon>Vibrionales</taxon>
        <taxon>Vibrionaceae</taxon>
        <taxon>Vibrio</taxon>
    </lineage>
</organism>
<accession>A7MTD7</accession>
<evidence type="ECO:0000255" key="1">
    <source>
        <dbReference type="HAMAP-Rule" id="MF_00161"/>
    </source>
</evidence>